<comment type="function">
    <text evidence="1">ATP-binding (A) component of a common energy-coupling factor (ECF) ABC-transporter complex. Unlike classic ABC transporters this ECF transporter provides the energy necessary to transport a number of different substrates.</text>
</comment>
<comment type="subunit">
    <text evidence="1">Forms a stable energy-coupling factor (ECF) transporter complex composed of 2 membrane-embedded substrate-binding proteins (S component), 2 ATP-binding proteins (A component) and 2 transmembrane proteins (T component).</text>
</comment>
<comment type="subcellular location">
    <subcellularLocation>
        <location evidence="1">Cell membrane</location>
        <topology evidence="1">Peripheral membrane protein</topology>
    </subcellularLocation>
</comment>
<comment type="similarity">
    <text evidence="1">Belongs to the ABC transporter superfamily. Energy-coupling factor EcfA family.</text>
</comment>
<keyword id="KW-0067">ATP-binding</keyword>
<keyword id="KW-1003">Cell membrane</keyword>
<keyword id="KW-0472">Membrane</keyword>
<keyword id="KW-0547">Nucleotide-binding</keyword>
<keyword id="KW-1278">Translocase</keyword>
<keyword id="KW-0813">Transport</keyword>
<accession>Q7A470</accession>
<protein>
    <recommendedName>
        <fullName evidence="1">Energy-coupling factor transporter ATP-binding protein EcfA1</fullName>
        <shortName evidence="1">ECF transporter A component EcfA1</shortName>
        <ecNumber evidence="1">7.-.-.-</ecNumber>
    </recommendedName>
</protein>
<proteinExistence type="inferred from homology"/>
<reference key="1">
    <citation type="journal article" date="2001" name="Lancet">
        <title>Whole genome sequencing of meticillin-resistant Staphylococcus aureus.</title>
        <authorList>
            <person name="Kuroda M."/>
            <person name="Ohta T."/>
            <person name="Uchiyama I."/>
            <person name="Baba T."/>
            <person name="Yuzawa H."/>
            <person name="Kobayashi I."/>
            <person name="Cui L."/>
            <person name="Oguchi A."/>
            <person name="Aoki K."/>
            <person name="Nagai Y."/>
            <person name="Lian J.-Q."/>
            <person name="Ito T."/>
            <person name="Kanamori M."/>
            <person name="Matsumaru H."/>
            <person name="Maruyama A."/>
            <person name="Murakami H."/>
            <person name="Hosoyama A."/>
            <person name="Mizutani-Ui Y."/>
            <person name="Takahashi N.K."/>
            <person name="Sawano T."/>
            <person name="Inoue R."/>
            <person name="Kaito C."/>
            <person name="Sekimizu K."/>
            <person name="Hirakawa H."/>
            <person name="Kuhara S."/>
            <person name="Goto S."/>
            <person name="Yabuzaki J."/>
            <person name="Kanehisa M."/>
            <person name="Yamashita A."/>
            <person name="Oshima K."/>
            <person name="Furuya K."/>
            <person name="Yoshino C."/>
            <person name="Shiba T."/>
            <person name="Hattori M."/>
            <person name="Ogasawara N."/>
            <person name="Hayashi H."/>
            <person name="Hiramatsu K."/>
        </authorList>
    </citation>
    <scope>NUCLEOTIDE SEQUENCE [LARGE SCALE GENOMIC DNA]</scope>
    <source>
        <strain>N315</strain>
    </source>
</reference>
<organism>
    <name type="scientific">Staphylococcus aureus (strain N315)</name>
    <dbReference type="NCBI Taxonomy" id="158879"/>
    <lineage>
        <taxon>Bacteria</taxon>
        <taxon>Bacillati</taxon>
        <taxon>Bacillota</taxon>
        <taxon>Bacilli</taxon>
        <taxon>Bacillales</taxon>
        <taxon>Staphylococcaceae</taxon>
        <taxon>Staphylococcus</taxon>
    </lineage>
</organism>
<sequence length="269" mass="30047">MEDKNSVIVFKNVSFQYQSDASFTLKDVSFNIPKGQWTSIVGHNGSGKSTIAKLMIGIEKVKSGEIFYNNQAITDDNFEKLRKDIGIVFQNPDNQFVGSIVKYDVAFGLENHAVPHDEMHRRVSEALKQVDMLERADYEPNALSGGQKQRVAIASVLALNPSVIILDEATSMLDPDARQNLLDLVRKVKSEHNITIISITHDLSEAMEADHVIVMNKGTVYKEGTATEIFDHAEELTRIGLDLPFPIKINQMLGHQTSFLTYEGLVDQL</sequence>
<name>ECFA1_STAAN</name>
<feature type="chain" id="PRO_0000092069" description="Energy-coupling factor transporter ATP-binding protein EcfA1">
    <location>
        <begin position="1"/>
        <end position="269"/>
    </location>
</feature>
<feature type="domain" description="ABC transporter" evidence="1">
    <location>
        <begin position="8"/>
        <end position="242"/>
    </location>
</feature>
<feature type="binding site" evidence="1">
    <location>
        <begin position="42"/>
        <end position="49"/>
    </location>
    <ligand>
        <name>ATP</name>
        <dbReference type="ChEBI" id="CHEBI:30616"/>
    </ligand>
</feature>
<dbReference type="EC" id="7.-.-.-" evidence="1"/>
<dbReference type="EMBL" id="BA000018">
    <property type="protein sequence ID" value="BAB43314.1"/>
    <property type="molecule type" value="Genomic_DNA"/>
</dbReference>
<dbReference type="PIR" id="A99919">
    <property type="entry name" value="A99919"/>
</dbReference>
<dbReference type="RefSeq" id="WP_000389658.1">
    <property type="nucleotide sequence ID" value="NC_002745.2"/>
</dbReference>
<dbReference type="SMR" id="Q7A470"/>
<dbReference type="EnsemblBacteria" id="BAB43314">
    <property type="protein sequence ID" value="BAB43314"/>
    <property type="gene ID" value="BAB43314"/>
</dbReference>
<dbReference type="KEGG" id="sau:SA2021"/>
<dbReference type="HOGENOM" id="CLU_000604_1_22_9"/>
<dbReference type="GO" id="GO:0043190">
    <property type="term" value="C:ATP-binding cassette (ABC) transporter complex"/>
    <property type="evidence" value="ECO:0007669"/>
    <property type="project" value="TreeGrafter"/>
</dbReference>
<dbReference type="GO" id="GO:0005524">
    <property type="term" value="F:ATP binding"/>
    <property type="evidence" value="ECO:0007669"/>
    <property type="project" value="UniProtKB-KW"/>
</dbReference>
<dbReference type="GO" id="GO:0016887">
    <property type="term" value="F:ATP hydrolysis activity"/>
    <property type="evidence" value="ECO:0007669"/>
    <property type="project" value="InterPro"/>
</dbReference>
<dbReference type="GO" id="GO:0042626">
    <property type="term" value="F:ATPase-coupled transmembrane transporter activity"/>
    <property type="evidence" value="ECO:0007669"/>
    <property type="project" value="TreeGrafter"/>
</dbReference>
<dbReference type="CDD" id="cd03225">
    <property type="entry name" value="ABC_cobalt_CbiO_domain1"/>
    <property type="match status" value="1"/>
</dbReference>
<dbReference type="FunFam" id="3.40.50.300:FF:000224">
    <property type="entry name" value="Energy-coupling factor transporter ATP-binding protein EcfA"/>
    <property type="match status" value="1"/>
</dbReference>
<dbReference type="Gene3D" id="3.40.50.300">
    <property type="entry name" value="P-loop containing nucleotide triphosphate hydrolases"/>
    <property type="match status" value="1"/>
</dbReference>
<dbReference type="InterPro" id="IPR003593">
    <property type="entry name" value="AAA+_ATPase"/>
</dbReference>
<dbReference type="InterPro" id="IPR003439">
    <property type="entry name" value="ABC_transporter-like_ATP-bd"/>
</dbReference>
<dbReference type="InterPro" id="IPR017871">
    <property type="entry name" value="ABC_transporter-like_CS"/>
</dbReference>
<dbReference type="InterPro" id="IPR015856">
    <property type="entry name" value="ABC_transpr_CbiO/EcfA_su"/>
</dbReference>
<dbReference type="InterPro" id="IPR050095">
    <property type="entry name" value="ECF_ABC_transporter_ATP-bd"/>
</dbReference>
<dbReference type="InterPro" id="IPR030947">
    <property type="entry name" value="EcfA_1"/>
</dbReference>
<dbReference type="InterPro" id="IPR027417">
    <property type="entry name" value="P-loop_NTPase"/>
</dbReference>
<dbReference type="NCBIfam" id="TIGR04520">
    <property type="entry name" value="ECF_ATPase_1"/>
    <property type="match status" value="1"/>
</dbReference>
<dbReference type="NCBIfam" id="NF010167">
    <property type="entry name" value="PRK13648.1"/>
    <property type="match status" value="1"/>
</dbReference>
<dbReference type="PANTHER" id="PTHR43553:SF24">
    <property type="entry name" value="ENERGY-COUPLING FACTOR TRANSPORTER ATP-BINDING PROTEIN ECFA1"/>
    <property type="match status" value="1"/>
</dbReference>
<dbReference type="PANTHER" id="PTHR43553">
    <property type="entry name" value="HEAVY METAL TRANSPORTER"/>
    <property type="match status" value="1"/>
</dbReference>
<dbReference type="Pfam" id="PF00005">
    <property type="entry name" value="ABC_tran"/>
    <property type="match status" value="1"/>
</dbReference>
<dbReference type="SMART" id="SM00382">
    <property type="entry name" value="AAA"/>
    <property type="match status" value="1"/>
</dbReference>
<dbReference type="SUPFAM" id="SSF52540">
    <property type="entry name" value="P-loop containing nucleoside triphosphate hydrolases"/>
    <property type="match status" value="1"/>
</dbReference>
<dbReference type="PROSITE" id="PS00211">
    <property type="entry name" value="ABC_TRANSPORTER_1"/>
    <property type="match status" value="1"/>
</dbReference>
<dbReference type="PROSITE" id="PS50893">
    <property type="entry name" value="ABC_TRANSPORTER_2"/>
    <property type="match status" value="1"/>
</dbReference>
<dbReference type="PROSITE" id="PS51246">
    <property type="entry name" value="CBIO"/>
    <property type="match status" value="1"/>
</dbReference>
<gene>
    <name evidence="1" type="primary">ecfA1</name>
    <name type="synonym">cbiO1</name>
    <name type="ordered locus">SA2021</name>
</gene>
<evidence type="ECO:0000255" key="1">
    <source>
        <dbReference type="HAMAP-Rule" id="MF_01710"/>
    </source>
</evidence>